<keyword id="KW-1185">Reference proteome</keyword>
<keyword id="KW-0687">Ribonucleoprotein</keyword>
<keyword id="KW-0689">Ribosomal protein</keyword>
<keyword id="KW-0694">RNA-binding</keyword>
<keyword id="KW-0699">rRNA-binding</keyword>
<keyword id="KW-0820">tRNA-binding</keyword>
<organism>
    <name type="scientific">Helicobacter hepaticus (strain ATCC 51449 / 3B1)</name>
    <dbReference type="NCBI Taxonomy" id="235279"/>
    <lineage>
        <taxon>Bacteria</taxon>
        <taxon>Pseudomonadati</taxon>
        <taxon>Campylobacterota</taxon>
        <taxon>Epsilonproteobacteria</taxon>
        <taxon>Campylobacterales</taxon>
        <taxon>Helicobacteraceae</taxon>
        <taxon>Helicobacter</taxon>
    </lineage>
</organism>
<evidence type="ECO:0000255" key="1">
    <source>
        <dbReference type="HAMAP-Rule" id="MF_00480"/>
    </source>
</evidence>
<evidence type="ECO:0000305" key="2"/>
<dbReference type="EMBL" id="AE017125">
    <property type="protein sequence ID" value="AAP76956.1"/>
    <property type="molecule type" value="Genomic_DNA"/>
</dbReference>
<dbReference type="RefSeq" id="WP_011115202.1">
    <property type="nucleotide sequence ID" value="NC_004917.1"/>
</dbReference>
<dbReference type="SMR" id="Q7VJ84"/>
<dbReference type="STRING" id="235279.HH_0359"/>
<dbReference type="KEGG" id="hhe:HH_0359"/>
<dbReference type="eggNOG" id="COG0049">
    <property type="taxonomic scope" value="Bacteria"/>
</dbReference>
<dbReference type="HOGENOM" id="CLU_072226_1_1_7"/>
<dbReference type="OrthoDB" id="9807653at2"/>
<dbReference type="Proteomes" id="UP000002495">
    <property type="component" value="Chromosome"/>
</dbReference>
<dbReference type="GO" id="GO:0015935">
    <property type="term" value="C:small ribosomal subunit"/>
    <property type="evidence" value="ECO:0007669"/>
    <property type="project" value="InterPro"/>
</dbReference>
<dbReference type="GO" id="GO:0019843">
    <property type="term" value="F:rRNA binding"/>
    <property type="evidence" value="ECO:0007669"/>
    <property type="project" value="UniProtKB-UniRule"/>
</dbReference>
<dbReference type="GO" id="GO:0003735">
    <property type="term" value="F:structural constituent of ribosome"/>
    <property type="evidence" value="ECO:0007669"/>
    <property type="project" value="InterPro"/>
</dbReference>
<dbReference type="GO" id="GO:0000049">
    <property type="term" value="F:tRNA binding"/>
    <property type="evidence" value="ECO:0007669"/>
    <property type="project" value="UniProtKB-UniRule"/>
</dbReference>
<dbReference type="GO" id="GO:0006412">
    <property type="term" value="P:translation"/>
    <property type="evidence" value="ECO:0007669"/>
    <property type="project" value="UniProtKB-UniRule"/>
</dbReference>
<dbReference type="CDD" id="cd14869">
    <property type="entry name" value="uS7_Bacteria"/>
    <property type="match status" value="1"/>
</dbReference>
<dbReference type="FunFam" id="1.10.455.10:FF:000001">
    <property type="entry name" value="30S ribosomal protein S7"/>
    <property type="match status" value="1"/>
</dbReference>
<dbReference type="Gene3D" id="1.10.455.10">
    <property type="entry name" value="Ribosomal protein S7 domain"/>
    <property type="match status" value="1"/>
</dbReference>
<dbReference type="HAMAP" id="MF_00480_B">
    <property type="entry name" value="Ribosomal_uS7_B"/>
    <property type="match status" value="1"/>
</dbReference>
<dbReference type="InterPro" id="IPR000235">
    <property type="entry name" value="Ribosomal_uS7"/>
</dbReference>
<dbReference type="InterPro" id="IPR005717">
    <property type="entry name" value="Ribosomal_uS7_bac/org-type"/>
</dbReference>
<dbReference type="InterPro" id="IPR020606">
    <property type="entry name" value="Ribosomal_uS7_CS"/>
</dbReference>
<dbReference type="InterPro" id="IPR023798">
    <property type="entry name" value="Ribosomal_uS7_dom"/>
</dbReference>
<dbReference type="InterPro" id="IPR036823">
    <property type="entry name" value="Ribosomal_uS7_dom_sf"/>
</dbReference>
<dbReference type="NCBIfam" id="TIGR01029">
    <property type="entry name" value="rpsG_bact"/>
    <property type="match status" value="1"/>
</dbReference>
<dbReference type="PANTHER" id="PTHR11205">
    <property type="entry name" value="RIBOSOMAL PROTEIN S7"/>
    <property type="match status" value="1"/>
</dbReference>
<dbReference type="Pfam" id="PF00177">
    <property type="entry name" value="Ribosomal_S7"/>
    <property type="match status" value="1"/>
</dbReference>
<dbReference type="PIRSF" id="PIRSF002122">
    <property type="entry name" value="RPS7p_RPS7a_RPS5e_RPS7o"/>
    <property type="match status" value="1"/>
</dbReference>
<dbReference type="SUPFAM" id="SSF47973">
    <property type="entry name" value="Ribosomal protein S7"/>
    <property type="match status" value="1"/>
</dbReference>
<dbReference type="PROSITE" id="PS00052">
    <property type="entry name" value="RIBOSOMAL_S7"/>
    <property type="match status" value="1"/>
</dbReference>
<sequence length="155" mass="17958">MRRRKAPVREVLGDPIYNNKVVTKFINKMMLDGKKSVSEKIIYAAFDKIEEKSGEKGIEVFEKALERVKPLVEVRSRRVGGATYQVPVEVRPARQQSLSIRWLLEATRKRNERTMIERLASELVDAANERGAAFKKKEDVHKMAEANKAFAHYRW</sequence>
<reference key="1">
    <citation type="journal article" date="2003" name="Proc. Natl. Acad. Sci. U.S.A.">
        <title>The complete genome sequence of the carcinogenic bacterium Helicobacter hepaticus.</title>
        <authorList>
            <person name="Suerbaum S."/>
            <person name="Josenhans C."/>
            <person name="Sterzenbach T."/>
            <person name="Drescher B."/>
            <person name="Brandt P."/>
            <person name="Bell M."/>
            <person name="Droege M."/>
            <person name="Fartmann B."/>
            <person name="Fischer H.-P."/>
            <person name="Ge Z."/>
            <person name="Hoerster A."/>
            <person name="Holland R."/>
            <person name="Klein K."/>
            <person name="Koenig J."/>
            <person name="Macko L."/>
            <person name="Mendz G.L."/>
            <person name="Nyakatura G."/>
            <person name="Schauer D.B."/>
            <person name="Shen Z."/>
            <person name="Weber J."/>
            <person name="Frosch M."/>
            <person name="Fox J.G."/>
        </authorList>
    </citation>
    <scope>NUCLEOTIDE SEQUENCE [LARGE SCALE GENOMIC DNA]</scope>
    <source>
        <strain>ATCC 51449 / 3B1</strain>
    </source>
</reference>
<proteinExistence type="inferred from homology"/>
<name>RS7_HELHP</name>
<comment type="function">
    <text evidence="1">One of the primary rRNA binding proteins, it binds directly to 16S rRNA where it nucleates assembly of the head domain of the 30S subunit. Is located at the subunit interface close to the decoding center, probably blocks exit of the E-site tRNA.</text>
</comment>
<comment type="subunit">
    <text evidence="1">Part of the 30S ribosomal subunit. Contacts proteins S9 and S11.</text>
</comment>
<comment type="similarity">
    <text evidence="1">Belongs to the universal ribosomal protein uS7 family.</text>
</comment>
<accession>Q7VJ84</accession>
<protein>
    <recommendedName>
        <fullName evidence="1">Small ribosomal subunit protein uS7</fullName>
    </recommendedName>
    <alternativeName>
        <fullName evidence="2">30S ribosomal protein S7</fullName>
    </alternativeName>
</protein>
<gene>
    <name evidence="1" type="primary">rpsG</name>
    <name type="ordered locus">HH_0359</name>
</gene>
<feature type="chain" id="PRO_0000124272" description="Small ribosomal subunit protein uS7">
    <location>
        <begin position="1"/>
        <end position="155"/>
    </location>
</feature>